<dbReference type="EC" id="2.7.7.6" evidence="1"/>
<dbReference type="EMBL" id="CP000884">
    <property type="protein sequence ID" value="ABX33157.1"/>
    <property type="molecule type" value="Genomic_DNA"/>
</dbReference>
<dbReference type="RefSeq" id="WP_012202443.1">
    <property type="nucleotide sequence ID" value="NC_010002.1"/>
</dbReference>
<dbReference type="SMR" id="A9BR99"/>
<dbReference type="STRING" id="398578.Daci_0511"/>
<dbReference type="GeneID" id="24116481"/>
<dbReference type="KEGG" id="dac:Daci_0511"/>
<dbReference type="eggNOG" id="COG0086">
    <property type="taxonomic scope" value="Bacteria"/>
</dbReference>
<dbReference type="HOGENOM" id="CLU_000524_3_1_4"/>
<dbReference type="Proteomes" id="UP000000784">
    <property type="component" value="Chromosome"/>
</dbReference>
<dbReference type="GO" id="GO:0000428">
    <property type="term" value="C:DNA-directed RNA polymerase complex"/>
    <property type="evidence" value="ECO:0007669"/>
    <property type="project" value="UniProtKB-KW"/>
</dbReference>
<dbReference type="GO" id="GO:0003677">
    <property type="term" value="F:DNA binding"/>
    <property type="evidence" value="ECO:0007669"/>
    <property type="project" value="UniProtKB-UniRule"/>
</dbReference>
<dbReference type="GO" id="GO:0003899">
    <property type="term" value="F:DNA-directed RNA polymerase activity"/>
    <property type="evidence" value="ECO:0007669"/>
    <property type="project" value="UniProtKB-UniRule"/>
</dbReference>
<dbReference type="GO" id="GO:0000287">
    <property type="term" value="F:magnesium ion binding"/>
    <property type="evidence" value="ECO:0007669"/>
    <property type="project" value="UniProtKB-UniRule"/>
</dbReference>
<dbReference type="GO" id="GO:0008270">
    <property type="term" value="F:zinc ion binding"/>
    <property type="evidence" value="ECO:0007669"/>
    <property type="project" value="UniProtKB-UniRule"/>
</dbReference>
<dbReference type="GO" id="GO:0006351">
    <property type="term" value="P:DNA-templated transcription"/>
    <property type="evidence" value="ECO:0007669"/>
    <property type="project" value="UniProtKB-UniRule"/>
</dbReference>
<dbReference type="CDD" id="cd02655">
    <property type="entry name" value="RNAP_beta'_C"/>
    <property type="match status" value="1"/>
</dbReference>
<dbReference type="CDD" id="cd01609">
    <property type="entry name" value="RNAP_beta'_N"/>
    <property type="match status" value="1"/>
</dbReference>
<dbReference type="FunFam" id="1.10.132.30:FF:000003">
    <property type="entry name" value="DNA-directed RNA polymerase subunit beta"/>
    <property type="match status" value="1"/>
</dbReference>
<dbReference type="FunFam" id="1.10.150.390:FF:000002">
    <property type="entry name" value="DNA-directed RNA polymerase subunit beta"/>
    <property type="match status" value="1"/>
</dbReference>
<dbReference type="FunFam" id="4.10.860.120:FF:000001">
    <property type="entry name" value="DNA-directed RNA polymerase subunit beta"/>
    <property type="match status" value="1"/>
</dbReference>
<dbReference type="Gene3D" id="1.10.132.30">
    <property type="match status" value="1"/>
</dbReference>
<dbReference type="Gene3D" id="1.10.150.390">
    <property type="match status" value="1"/>
</dbReference>
<dbReference type="Gene3D" id="1.10.1790.20">
    <property type="match status" value="1"/>
</dbReference>
<dbReference type="Gene3D" id="1.10.40.90">
    <property type="match status" value="1"/>
</dbReference>
<dbReference type="Gene3D" id="2.40.40.20">
    <property type="match status" value="1"/>
</dbReference>
<dbReference type="Gene3D" id="2.40.50.100">
    <property type="match status" value="3"/>
</dbReference>
<dbReference type="Gene3D" id="4.10.860.120">
    <property type="entry name" value="RNA polymerase II, clamp domain"/>
    <property type="match status" value="1"/>
</dbReference>
<dbReference type="Gene3D" id="1.10.274.100">
    <property type="entry name" value="RNA polymerase Rpb1, domain 3"/>
    <property type="match status" value="1"/>
</dbReference>
<dbReference type="HAMAP" id="MF_01322">
    <property type="entry name" value="RNApol_bact_RpoC"/>
    <property type="match status" value="1"/>
</dbReference>
<dbReference type="InterPro" id="IPR045867">
    <property type="entry name" value="DNA-dir_RpoC_beta_prime"/>
</dbReference>
<dbReference type="InterPro" id="IPR012754">
    <property type="entry name" value="DNA-dir_RpoC_beta_prime_bact"/>
</dbReference>
<dbReference type="InterPro" id="IPR000722">
    <property type="entry name" value="RNA_pol_asu"/>
</dbReference>
<dbReference type="InterPro" id="IPR006592">
    <property type="entry name" value="RNA_pol_N"/>
</dbReference>
<dbReference type="InterPro" id="IPR007080">
    <property type="entry name" value="RNA_pol_Rpb1_1"/>
</dbReference>
<dbReference type="InterPro" id="IPR007066">
    <property type="entry name" value="RNA_pol_Rpb1_3"/>
</dbReference>
<dbReference type="InterPro" id="IPR042102">
    <property type="entry name" value="RNA_pol_Rpb1_3_sf"/>
</dbReference>
<dbReference type="InterPro" id="IPR007083">
    <property type="entry name" value="RNA_pol_Rpb1_4"/>
</dbReference>
<dbReference type="InterPro" id="IPR007081">
    <property type="entry name" value="RNA_pol_Rpb1_5"/>
</dbReference>
<dbReference type="InterPro" id="IPR044893">
    <property type="entry name" value="RNA_pol_Rpb1_clamp_domain"/>
</dbReference>
<dbReference type="InterPro" id="IPR038120">
    <property type="entry name" value="Rpb1_funnel_sf"/>
</dbReference>
<dbReference type="NCBIfam" id="TIGR02386">
    <property type="entry name" value="rpoC_TIGR"/>
    <property type="match status" value="1"/>
</dbReference>
<dbReference type="PANTHER" id="PTHR19376">
    <property type="entry name" value="DNA-DIRECTED RNA POLYMERASE"/>
    <property type="match status" value="1"/>
</dbReference>
<dbReference type="PANTHER" id="PTHR19376:SF54">
    <property type="entry name" value="DNA-DIRECTED RNA POLYMERASE SUBUNIT BETA"/>
    <property type="match status" value="1"/>
</dbReference>
<dbReference type="Pfam" id="PF04997">
    <property type="entry name" value="RNA_pol_Rpb1_1"/>
    <property type="match status" value="1"/>
</dbReference>
<dbReference type="Pfam" id="PF00623">
    <property type="entry name" value="RNA_pol_Rpb1_2"/>
    <property type="match status" value="2"/>
</dbReference>
<dbReference type="Pfam" id="PF04983">
    <property type="entry name" value="RNA_pol_Rpb1_3"/>
    <property type="match status" value="1"/>
</dbReference>
<dbReference type="Pfam" id="PF05000">
    <property type="entry name" value="RNA_pol_Rpb1_4"/>
    <property type="match status" value="1"/>
</dbReference>
<dbReference type="Pfam" id="PF04998">
    <property type="entry name" value="RNA_pol_Rpb1_5"/>
    <property type="match status" value="1"/>
</dbReference>
<dbReference type="SMART" id="SM00663">
    <property type="entry name" value="RPOLA_N"/>
    <property type="match status" value="1"/>
</dbReference>
<dbReference type="SUPFAM" id="SSF64484">
    <property type="entry name" value="beta and beta-prime subunits of DNA dependent RNA-polymerase"/>
    <property type="match status" value="1"/>
</dbReference>
<keyword id="KW-0240">DNA-directed RNA polymerase</keyword>
<keyword id="KW-0460">Magnesium</keyword>
<keyword id="KW-0479">Metal-binding</keyword>
<keyword id="KW-0548">Nucleotidyltransferase</keyword>
<keyword id="KW-1185">Reference proteome</keyword>
<keyword id="KW-0804">Transcription</keyword>
<keyword id="KW-0808">Transferase</keyword>
<keyword id="KW-0862">Zinc</keyword>
<gene>
    <name evidence="1" type="primary">rpoC</name>
    <name type="ordered locus">Daci_0511</name>
</gene>
<sequence length="1409" mass="154709">MKSLLDLFKQFTPDEHFDAIKIGLASPEKIRSWSFGEVKKPETINYRTFKPERDGLFCAKIFGPIKDYECLCGKYKRLKHRGVICEKCGVEVTQTKVRRERMGHIDLAAPCAHIWFLKSLPSRLGLVLDMTLRDIERVLYFEAYVVTDPGMTPLKKFSIMTEDDYEAKRTEYGDEFEAKMGAEGIKDLLEGIDIDVETERLRGDLTGSEVKVKKNAKRLKLLEAFKKSGIKPGWMVMEVLPVLPPDLRPLVPLDGGRFATSDLNDLYRRVINRNSRLRRLLELKAPEIIARNEKRMLQEAVDSLLDNGRRGKAMTGANKRALKSLADMIKGKSGRFRQNLLGKRVDYSGRSVITVGPYLKLHQCGLPKLMALELFKPFIFAQLEQRGIATTIKAAKKEVESGTPVVWDILEEVIKEHPVMLNRAPTLHRLGIQAFEPILIEGKAIQLHPLVCAAFNADFDGDQMAVHVPLSVEAQMEARTLMLASNNVLFPASGEPSIVPSQDVVLGLYHATRERINGKGEGMIFADIGEVQRALDSDQVELAAKISVRLTEWTKNKDSGEFEPSTSLVETTVGRALMSEILPKGLPFSHMNKALKKKEISKLINASFRKCGLKATVVFADKLLQNGFRLSTHAGISIAIGDMLVPPQKAEIIGRAEAEVKEIEQQYVSGLVTAGERYNKVVDIWGKAGDEVSKVMMAQLAKEKVIDRHGNEVEQESFNAIYMMADSGARGSAAQIRQLAGMRGLMAKPDGSIIETPITANFREGLNVLQYFISTHGARKGLADTALKTANSGYLTRRLVDVTQDLVVNEDDCGTTNGALMRAIVEGGEVIESLRDRVLGRTTAEDVVHPETLAVLLPAGTLLNEDGIDELELQGVDEIKVRTALTCETRYGLCAKCYGRDLGRGGLINLGEAVGVIAAQSIGEPGTQLTMRTFHIGGAASRAAIASSVEAKSNGSISFNSTMRYVSNTKGELVVISRSGEIVISDNGRERERHKVPYGAVLTVRPDQQVKAGLILANWDPLTRPIITEYAGQVRFENVEEGLTVAKQVDEVTGLSTLVVIDPKRRGSAKVVRPQVKLIDANNQEVKIPGTDHSVTIGFQVGALIQVRDGQDVGPGEVLARIPVEGQKTRDITGGLPRVAELFEARTPKDKGTLAEMTGTISFGKETKGKVRMQITDLDGKVWEELVPKEKNILVHEGQVVNKGESIVDGPADPQDILRLLGIEELSRYIVDEVQDVYRLQGVKINDKHIEVIVRQMLRRVVVENTGDSTYIAGEQVERSEILNTNEALQREGKIPATYSNVLLGITKASLSTDSFISAASFQETTRVLTEAAIMGKRDELRGLKENVIVGRLIPAGTGLAYHQARKAKDAMDDAERRAIADAEAAELAGVMADDDTAAVSVAGDASAD</sequence>
<evidence type="ECO:0000255" key="1">
    <source>
        <dbReference type="HAMAP-Rule" id="MF_01322"/>
    </source>
</evidence>
<name>RPOC_DELAS</name>
<organism>
    <name type="scientific">Delftia acidovorans (strain DSM 14801 / SPH-1)</name>
    <dbReference type="NCBI Taxonomy" id="398578"/>
    <lineage>
        <taxon>Bacteria</taxon>
        <taxon>Pseudomonadati</taxon>
        <taxon>Pseudomonadota</taxon>
        <taxon>Betaproteobacteria</taxon>
        <taxon>Burkholderiales</taxon>
        <taxon>Comamonadaceae</taxon>
        <taxon>Delftia</taxon>
    </lineage>
</organism>
<proteinExistence type="inferred from homology"/>
<accession>A9BR99</accession>
<reference key="1">
    <citation type="submission" date="2007-11" db="EMBL/GenBank/DDBJ databases">
        <title>Complete sequence of Delftia acidovorans DSM 14801 / SPH-1.</title>
        <authorList>
            <person name="Copeland A."/>
            <person name="Lucas S."/>
            <person name="Lapidus A."/>
            <person name="Barry K."/>
            <person name="Glavina del Rio T."/>
            <person name="Dalin E."/>
            <person name="Tice H."/>
            <person name="Pitluck S."/>
            <person name="Lowry S."/>
            <person name="Clum A."/>
            <person name="Schmutz J."/>
            <person name="Larimer F."/>
            <person name="Land M."/>
            <person name="Hauser L."/>
            <person name="Kyrpides N."/>
            <person name="Kim E."/>
            <person name="Schleheck D."/>
            <person name="Richardson P."/>
        </authorList>
    </citation>
    <scope>NUCLEOTIDE SEQUENCE [LARGE SCALE GENOMIC DNA]</scope>
    <source>
        <strain>DSM 14801 / SPH-1</strain>
    </source>
</reference>
<protein>
    <recommendedName>
        <fullName evidence="1">DNA-directed RNA polymerase subunit beta'</fullName>
        <shortName evidence="1">RNAP subunit beta'</shortName>
        <ecNumber evidence="1">2.7.7.6</ecNumber>
    </recommendedName>
    <alternativeName>
        <fullName evidence="1">RNA polymerase subunit beta'</fullName>
    </alternativeName>
    <alternativeName>
        <fullName evidence="1">Transcriptase subunit beta'</fullName>
    </alternativeName>
</protein>
<comment type="function">
    <text evidence="1">DNA-dependent RNA polymerase catalyzes the transcription of DNA into RNA using the four ribonucleoside triphosphates as substrates.</text>
</comment>
<comment type="catalytic activity">
    <reaction evidence="1">
        <text>RNA(n) + a ribonucleoside 5'-triphosphate = RNA(n+1) + diphosphate</text>
        <dbReference type="Rhea" id="RHEA:21248"/>
        <dbReference type="Rhea" id="RHEA-COMP:14527"/>
        <dbReference type="Rhea" id="RHEA-COMP:17342"/>
        <dbReference type="ChEBI" id="CHEBI:33019"/>
        <dbReference type="ChEBI" id="CHEBI:61557"/>
        <dbReference type="ChEBI" id="CHEBI:140395"/>
        <dbReference type="EC" id="2.7.7.6"/>
    </reaction>
</comment>
<comment type="cofactor">
    <cofactor evidence="1">
        <name>Mg(2+)</name>
        <dbReference type="ChEBI" id="CHEBI:18420"/>
    </cofactor>
    <text evidence="1">Binds 1 Mg(2+) ion per subunit.</text>
</comment>
<comment type="cofactor">
    <cofactor evidence="1">
        <name>Zn(2+)</name>
        <dbReference type="ChEBI" id="CHEBI:29105"/>
    </cofactor>
    <text evidence="1">Binds 2 Zn(2+) ions per subunit.</text>
</comment>
<comment type="subunit">
    <text evidence="1">The RNAP catalytic core consists of 2 alpha, 1 beta, 1 beta' and 1 omega subunit. When a sigma factor is associated with the core the holoenzyme is formed, which can initiate transcription.</text>
</comment>
<comment type="similarity">
    <text evidence="1">Belongs to the RNA polymerase beta' chain family.</text>
</comment>
<feature type="chain" id="PRO_1000141767" description="DNA-directed RNA polymerase subunit beta'">
    <location>
        <begin position="1"/>
        <end position="1409"/>
    </location>
</feature>
<feature type="binding site" evidence="1">
    <location>
        <position position="70"/>
    </location>
    <ligand>
        <name>Zn(2+)</name>
        <dbReference type="ChEBI" id="CHEBI:29105"/>
        <label>1</label>
    </ligand>
</feature>
<feature type="binding site" evidence="1">
    <location>
        <position position="72"/>
    </location>
    <ligand>
        <name>Zn(2+)</name>
        <dbReference type="ChEBI" id="CHEBI:29105"/>
        <label>1</label>
    </ligand>
</feature>
<feature type="binding site" evidence="1">
    <location>
        <position position="85"/>
    </location>
    <ligand>
        <name>Zn(2+)</name>
        <dbReference type="ChEBI" id="CHEBI:29105"/>
        <label>1</label>
    </ligand>
</feature>
<feature type="binding site" evidence="1">
    <location>
        <position position="88"/>
    </location>
    <ligand>
        <name>Zn(2+)</name>
        <dbReference type="ChEBI" id="CHEBI:29105"/>
        <label>1</label>
    </ligand>
</feature>
<feature type="binding site" evidence="1">
    <location>
        <position position="458"/>
    </location>
    <ligand>
        <name>Mg(2+)</name>
        <dbReference type="ChEBI" id="CHEBI:18420"/>
    </ligand>
</feature>
<feature type="binding site" evidence="1">
    <location>
        <position position="460"/>
    </location>
    <ligand>
        <name>Mg(2+)</name>
        <dbReference type="ChEBI" id="CHEBI:18420"/>
    </ligand>
</feature>
<feature type="binding site" evidence="1">
    <location>
        <position position="462"/>
    </location>
    <ligand>
        <name>Mg(2+)</name>
        <dbReference type="ChEBI" id="CHEBI:18420"/>
    </ligand>
</feature>
<feature type="binding site" evidence="1">
    <location>
        <position position="813"/>
    </location>
    <ligand>
        <name>Zn(2+)</name>
        <dbReference type="ChEBI" id="CHEBI:29105"/>
        <label>2</label>
    </ligand>
</feature>
<feature type="binding site" evidence="1">
    <location>
        <position position="887"/>
    </location>
    <ligand>
        <name>Zn(2+)</name>
        <dbReference type="ChEBI" id="CHEBI:29105"/>
        <label>2</label>
    </ligand>
</feature>
<feature type="binding site" evidence="1">
    <location>
        <position position="894"/>
    </location>
    <ligand>
        <name>Zn(2+)</name>
        <dbReference type="ChEBI" id="CHEBI:29105"/>
        <label>2</label>
    </ligand>
</feature>
<feature type="binding site" evidence="1">
    <location>
        <position position="897"/>
    </location>
    <ligand>
        <name>Zn(2+)</name>
        <dbReference type="ChEBI" id="CHEBI:29105"/>
        <label>2</label>
    </ligand>
</feature>